<name>MYB3_HORVU</name>
<reference key="1">
    <citation type="journal article" date="1993" name="Plant J.">
        <title>Myb genes from Hordeum vulgare: tissue-specific expression of chimeric Myb promoter/Gus genes in transgenic tobacco.</title>
        <authorList>
            <person name="Wissenbach M."/>
            <person name="Ueberlacker B."/>
            <person name="Vogt F."/>
            <person name="Becker D."/>
            <person name="Salamini F."/>
            <person name="Rohde W."/>
        </authorList>
    </citation>
    <scope>NUCLEOTIDE SEQUENCE [GENOMIC DNA / MRNA]</scope>
    <source>
        <strain>cv. Abyssinian 2231</strain>
        <tissue>Leaf</tissue>
    </source>
</reference>
<reference key="2">
    <citation type="journal article" date="1989" name="Mol. Gen. Genet.">
        <title>Multiple genes are transcribed in Hordeum vulgare and Zea mays that carry the DNA binding domain of the myb oncoproteins.</title>
        <authorList>
            <person name="Marocco A."/>
            <person name="Wissenbach M."/>
            <person name="Becker D."/>
            <person name="Paz-Ares J."/>
            <person name="Saedler H."/>
            <person name="Salamini F."/>
            <person name="Rohde W."/>
        </authorList>
    </citation>
    <scope>NUCLEOTIDE SEQUENCE [MRNA] OF 35-302</scope>
    <source>
        <strain>cv. Abyssinian 2231</strain>
    </source>
</reference>
<comment type="function">
    <text>Possible transcription activator in response to an external signal. May be involved in the regulation of flavonoid biosynthesis.</text>
</comment>
<comment type="subcellular location">
    <subcellularLocation>
        <location evidence="3">Nucleus</location>
    </subcellularLocation>
</comment>
<comment type="tissue specificity">
    <text>Germinating seed and apical meristem of shoot and root.</text>
</comment>
<dbReference type="EMBL" id="X70881">
    <property type="protein sequence ID" value="CAA50226.1"/>
    <property type="molecule type" value="Genomic_DNA"/>
</dbReference>
<dbReference type="EMBL" id="X70878">
    <property type="protein sequence ID" value="CAA50223.1"/>
    <property type="molecule type" value="mRNA"/>
</dbReference>
<dbReference type="PIR" id="S31818">
    <property type="entry name" value="S31818"/>
</dbReference>
<dbReference type="SMR" id="P20027"/>
<dbReference type="ExpressionAtlas" id="P20027">
    <property type="expression patterns" value="baseline and differential"/>
</dbReference>
<dbReference type="GO" id="GO:0005634">
    <property type="term" value="C:nucleus"/>
    <property type="evidence" value="ECO:0007669"/>
    <property type="project" value="UniProtKB-SubCell"/>
</dbReference>
<dbReference type="GO" id="GO:0003677">
    <property type="term" value="F:DNA binding"/>
    <property type="evidence" value="ECO:0007669"/>
    <property type="project" value="UniProtKB-KW"/>
</dbReference>
<dbReference type="CDD" id="cd00167">
    <property type="entry name" value="SANT"/>
    <property type="match status" value="2"/>
</dbReference>
<dbReference type="FunFam" id="1.10.10.60:FF:000158">
    <property type="entry name" value="MYB transcription factor"/>
    <property type="match status" value="1"/>
</dbReference>
<dbReference type="FunFam" id="1.10.10.60:FF:000268">
    <property type="entry name" value="Transcription factor MYB86"/>
    <property type="match status" value="1"/>
</dbReference>
<dbReference type="Gene3D" id="1.10.10.60">
    <property type="entry name" value="Homeodomain-like"/>
    <property type="match status" value="2"/>
</dbReference>
<dbReference type="InterPro" id="IPR009057">
    <property type="entry name" value="Homeodomain-like_sf"/>
</dbReference>
<dbReference type="InterPro" id="IPR017930">
    <property type="entry name" value="Myb_dom"/>
</dbReference>
<dbReference type="InterPro" id="IPR051953">
    <property type="entry name" value="Plant_SW-associated_TFs"/>
</dbReference>
<dbReference type="InterPro" id="IPR001005">
    <property type="entry name" value="SANT/Myb"/>
</dbReference>
<dbReference type="PANTHER" id="PTHR47997">
    <property type="entry name" value="MYB DOMAIN PROTEIN 55"/>
    <property type="match status" value="1"/>
</dbReference>
<dbReference type="PANTHER" id="PTHR47997:SF79">
    <property type="entry name" value="MYB-RELATED PROTEIN"/>
    <property type="match status" value="1"/>
</dbReference>
<dbReference type="Pfam" id="PF00249">
    <property type="entry name" value="Myb_DNA-binding"/>
    <property type="match status" value="2"/>
</dbReference>
<dbReference type="SMART" id="SM00717">
    <property type="entry name" value="SANT"/>
    <property type="match status" value="2"/>
</dbReference>
<dbReference type="SUPFAM" id="SSF46689">
    <property type="entry name" value="Homeodomain-like"/>
    <property type="match status" value="1"/>
</dbReference>
<dbReference type="PROSITE" id="PS51294">
    <property type="entry name" value="HTH_MYB"/>
    <property type="match status" value="2"/>
</dbReference>
<feature type="chain" id="PRO_0000197068" description="Myb-related protein Hv33">
    <location>
        <begin position="1"/>
        <end position="302"/>
    </location>
</feature>
<feature type="domain" description="HTH myb-type 1" evidence="1">
    <location>
        <begin position="11"/>
        <end position="63"/>
    </location>
</feature>
<feature type="domain" description="HTH myb-type 2" evidence="1">
    <location>
        <begin position="64"/>
        <end position="118"/>
    </location>
</feature>
<feature type="DNA-binding region" description="H-T-H motif" evidence="1">
    <location>
        <begin position="39"/>
        <end position="63"/>
    </location>
</feature>
<feature type="DNA-binding region" description="H-T-H motif" evidence="1">
    <location>
        <begin position="91"/>
        <end position="114"/>
    </location>
</feature>
<feature type="region of interest" description="Disordered" evidence="2">
    <location>
        <begin position="137"/>
        <end position="158"/>
    </location>
</feature>
<feature type="sequence conflict" description="In Ref. 2; CAA50223." evidence="3" ref="2">
    <original>A</original>
    <variation>P</variation>
    <location>
        <position position="259"/>
    </location>
</feature>
<sequence>MGRPSSGAVGQPKVRKGLWSPEEDEKLYNHIIRHGVGCWSSVPRLAALNRCGKSCRLRWINYLRPDLKRGCFSQQEEDHIVALHQILGNRWSQIASHLPGRTDNEIKNFWNSCIKKKLRQQGIDPATHKPMASADTATAAAALPDAEEEDRKPLCPAVDGSLVPKQPAVFDPFPLCVDYGAGFAEELGAANAAALYGQLCGGKEVADDDAGFGAADYSCVLDVSENLGYGESSSNSSNWNYGGEVGSVLDGEVPHWAKAEPAFAEMERQQQHSPAEQKLSLPCQEQSLLASFDFNLELEPYF</sequence>
<accession>P20027</accession>
<evidence type="ECO:0000255" key="1">
    <source>
        <dbReference type="PROSITE-ProRule" id="PRU00625"/>
    </source>
</evidence>
<evidence type="ECO:0000256" key="2">
    <source>
        <dbReference type="SAM" id="MobiDB-lite"/>
    </source>
</evidence>
<evidence type="ECO:0000305" key="3"/>
<keyword id="KW-0010">Activator</keyword>
<keyword id="KW-0238">DNA-binding</keyword>
<keyword id="KW-0539">Nucleus</keyword>
<keyword id="KW-0677">Repeat</keyword>
<keyword id="KW-0804">Transcription</keyword>
<keyword id="KW-0805">Transcription regulation</keyword>
<gene>
    <name type="primary">MYB2</name>
</gene>
<protein>
    <recommendedName>
        <fullName>Myb-related protein Hv33</fullName>
    </recommendedName>
</protein>
<proteinExistence type="evidence at transcript level"/>
<organism>
    <name type="scientific">Hordeum vulgare</name>
    <name type="common">Barley</name>
    <dbReference type="NCBI Taxonomy" id="4513"/>
    <lineage>
        <taxon>Eukaryota</taxon>
        <taxon>Viridiplantae</taxon>
        <taxon>Streptophyta</taxon>
        <taxon>Embryophyta</taxon>
        <taxon>Tracheophyta</taxon>
        <taxon>Spermatophyta</taxon>
        <taxon>Magnoliopsida</taxon>
        <taxon>Liliopsida</taxon>
        <taxon>Poales</taxon>
        <taxon>Poaceae</taxon>
        <taxon>BOP clade</taxon>
        <taxon>Pooideae</taxon>
        <taxon>Triticodae</taxon>
        <taxon>Triticeae</taxon>
        <taxon>Hordeinae</taxon>
        <taxon>Hordeum</taxon>
    </lineage>
</organism>